<accession>Q0T3Z1</accession>
<keyword id="KW-0004">4Fe-4S</keyword>
<keyword id="KW-0067">ATP-binding</keyword>
<keyword id="KW-0963">Cytoplasm</keyword>
<keyword id="KW-0408">Iron</keyword>
<keyword id="KW-0411">Iron-sulfur</keyword>
<keyword id="KW-0460">Magnesium</keyword>
<keyword id="KW-0479">Metal-binding</keyword>
<keyword id="KW-0547">Nucleotide-binding</keyword>
<keyword id="KW-0694">RNA-binding</keyword>
<keyword id="KW-0808">Transferase</keyword>
<keyword id="KW-0819">tRNA processing</keyword>
<keyword id="KW-0820">tRNA-binding</keyword>
<gene>
    <name evidence="1" type="primary">ttcA</name>
    <name type="ordered locus">SFV_1814</name>
</gene>
<organism>
    <name type="scientific">Shigella flexneri serotype 5b (strain 8401)</name>
    <dbReference type="NCBI Taxonomy" id="373384"/>
    <lineage>
        <taxon>Bacteria</taxon>
        <taxon>Pseudomonadati</taxon>
        <taxon>Pseudomonadota</taxon>
        <taxon>Gammaproteobacteria</taxon>
        <taxon>Enterobacterales</taxon>
        <taxon>Enterobacteriaceae</taxon>
        <taxon>Shigella</taxon>
    </lineage>
</organism>
<feature type="chain" id="PRO_0000348852" description="tRNA-cytidine(32) 2-sulfurtransferase">
    <location>
        <begin position="1"/>
        <end position="311"/>
    </location>
</feature>
<feature type="short sequence motif" description="PP-loop motif" evidence="1">
    <location>
        <begin position="47"/>
        <end position="52"/>
    </location>
</feature>
<feature type="binding site" evidence="1">
    <location>
        <position position="122"/>
    </location>
    <ligand>
        <name>[4Fe-4S] cluster</name>
        <dbReference type="ChEBI" id="CHEBI:49883"/>
    </ligand>
</feature>
<feature type="binding site" evidence="1">
    <location>
        <position position="125"/>
    </location>
    <ligand>
        <name>[4Fe-4S] cluster</name>
        <dbReference type="ChEBI" id="CHEBI:49883"/>
    </ligand>
</feature>
<feature type="binding site" evidence="1">
    <location>
        <position position="213"/>
    </location>
    <ligand>
        <name>[4Fe-4S] cluster</name>
        <dbReference type="ChEBI" id="CHEBI:49883"/>
    </ligand>
</feature>
<dbReference type="EC" id="2.8.1.-" evidence="1"/>
<dbReference type="EMBL" id="CP000266">
    <property type="protein sequence ID" value="ABF03974.1"/>
    <property type="molecule type" value="Genomic_DNA"/>
</dbReference>
<dbReference type="RefSeq" id="WP_000081423.1">
    <property type="nucleotide sequence ID" value="NC_008258.1"/>
</dbReference>
<dbReference type="SMR" id="Q0T3Z1"/>
<dbReference type="KEGG" id="sfv:SFV_1814"/>
<dbReference type="HOGENOM" id="CLU_026481_0_0_6"/>
<dbReference type="Proteomes" id="UP000000659">
    <property type="component" value="Chromosome"/>
</dbReference>
<dbReference type="GO" id="GO:0005737">
    <property type="term" value="C:cytoplasm"/>
    <property type="evidence" value="ECO:0007669"/>
    <property type="project" value="UniProtKB-SubCell"/>
</dbReference>
<dbReference type="GO" id="GO:0051539">
    <property type="term" value="F:4 iron, 4 sulfur cluster binding"/>
    <property type="evidence" value="ECO:0007669"/>
    <property type="project" value="UniProtKB-UniRule"/>
</dbReference>
<dbReference type="GO" id="GO:0005524">
    <property type="term" value="F:ATP binding"/>
    <property type="evidence" value="ECO:0007669"/>
    <property type="project" value="UniProtKB-UniRule"/>
</dbReference>
<dbReference type="GO" id="GO:0000287">
    <property type="term" value="F:magnesium ion binding"/>
    <property type="evidence" value="ECO:0007669"/>
    <property type="project" value="UniProtKB-UniRule"/>
</dbReference>
<dbReference type="GO" id="GO:0016783">
    <property type="term" value="F:sulfurtransferase activity"/>
    <property type="evidence" value="ECO:0007669"/>
    <property type="project" value="UniProtKB-UniRule"/>
</dbReference>
<dbReference type="GO" id="GO:0000049">
    <property type="term" value="F:tRNA binding"/>
    <property type="evidence" value="ECO:0007669"/>
    <property type="project" value="UniProtKB-KW"/>
</dbReference>
<dbReference type="GO" id="GO:0034227">
    <property type="term" value="P:tRNA thio-modification"/>
    <property type="evidence" value="ECO:0007669"/>
    <property type="project" value="UniProtKB-UniRule"/>
</dbReference>
<dbReference type="CDD" id="cd24138">
    <property type="entry name" value="TtcA-like"/>
    <property type="match status" value="1"/>
</dbReference>
<dbReference type="FunFam" id="3.40.50.620:FF:000046">
    <property type="entry name" value="tRNA-cytidine(32) 2-sulfurtransferase"/>
    <property type="match status" value="1"/>
</dbReference>
<dbReference type="Gene3D" id="3.40.50.620">
    <property type="entry name" value="HUPs"/>
    <property type="match status" value="1"/>
</dbReference>
<dbReference type="HAMAP" id="MF_01850">
    <property type="entry name" value="TtcA"/>
    <property type="match status" value="1"/>
</dbReference>
<dbReference type="InterPro" id="IPR014729">
    <property type="entry name" value="Rossmann-like_a/b/a_fold"/>
</dbReference>
<dbReference type="InterPro" id="IPR011063">
    <property type="entry name" value="TilS/TtcA_N"/>
</dbReference>
<dbReference type="InterPro" id="IPR012089">
    <property type="entry name" value="tRNA_Cyd_32_2_STrfase"/>
</dbReference>
<dbReference type="InterPro" id="IPR035107">
    <property type="entry name" value="tRNA_thiolation_TtcA_Ctu1"/>
</dbReference>
<dbReference type="NCBIfam" id="NF007972">
    <property type="entry name" value="PRK10696.1"/>
    <property type="match status" value="1"/>
</dbReference>
<dbReference type="PANTHER" id="PTHR43686:SF1">
    <property type="entry name" value="AMINOTRAN_5 DOMAIN-CONTAINING PROTEIN"/>
    <property type="match status" value="1"/>
</dbReference>
<dbReference type="PANTHER" id="PTHR43686">
    <property type="entry name" value="SULFURTRANSFERASE-RELATED"/>
    <property type="match status" value="1"/>
</dbReference>
<dbReference type="Pfam" id="PF01171">
    <property type="entry name" value="ATP_bind_3"/>
    <property type="match status" value="1"/>
</dbReference>
<dbReference type="PIRSF" id="PIRSF004976">
    <property type="entry name" value="ATPase_YdaO"/>
    <property type="match status" value="1"/>
</dbReference>
<dbReference type="SUPFAM" id="SSF52402">
    <property type="entry name" value="Adenine nucleotide alpha hydrolases-like"/>
    <property type="match status" value="1"/>
</dbReference>
<protein>
    <recommendedName>
        <fullName evidence="1">tRNA-cytidine(32) 2-sulfurtransferase</fullName>
        <ecNumber evidence="1">2.8.1.-</ecNumber>
    </recommendedName>
    <alternativeName>
        <fullName evidence="1">Two-thiocytidine biosynthesis protein A</fullName>
    </alternativeName>
    <alternativeName>
        <fullName evidence="1">tRNA 2-thiocytidine biosynthesis protein TtcA</fullName>
    </alternativeName>
</protein>
<proteinExistence type="inferred from homology"/>
<evidence type="ECO:0000255" key="1">
    <source>
        <dbReference type="HAMAP-Rule" id="MF_01850"/>
    </source>
</evidence>
<sequence>MSQNQEISKKEQYNLNKLQKRLRRNVGEAIADFNMIEEGDRIMVCLSGGKDSYTMLEILRNLQQSAPINFSLVAVNLDQKQPGFPEHVLPEYLEKLGVEYKIVEENTYGIVKEKIPEGKTTCSLCSRLRRGILYRTATELGTTKIALGHHRDDILQTLFLNMFYGGKMKGMPPKLMSDDGKHIVIRPLAYCREKDIQRFADAKAFPIIPCNLCGSQPNLQRQVIADMLRDWDKRYPGRIETMFSAMQNVVPSHLCDTNLFDFKGITHGSEVVNGGDLAFDREEIPLQPAGWQPEEDENQLDELRLNVVEVK</sequence>
<name>TTCA_SHIF8</name>
<comment type="function">
    <text evidence="1">Catalyzes the ATP-dependent 2-thiolation of cytidine in position 32 of tRNA, to form 2-thiocytidine (s(2)C32). The sulfur atoms are provided by the cysteine/cysteine desulfurase (IscS) system.</text>
</comment>
<comment type="catalytic activity">
    <reaction evidence="1">
        <text>cytidine(32) in tRNA + S-sulfanyl-L-cysteinyl-[cysteine desulfurase] + AH2 + ATP = 2-thiocytidine(32) in tRNA + L-cysteinyl-[cysteine desulfurase] + A + AMP + diphosphate + H(+)</text>
        <dbReference type="Rhea" id="RHEA:57048"/>
        <dbReference type="Rhea" id="RHEA-COMP:10288"/>
        <dbReference type="Rhea" id="RHEA-COMP:12157"/>
        <dbReference type="Rhea" id="RHEA-COMP:12158"/>
        <dbReference type="Rhea" id="RHEA-COMP:14821"/>
        <dbReference type="ChEBI" id="CHEBI:13193"/>
        <dbReference type="ChEBI" id="CHEBI:15378"/>
        <dbReference type="ChEBI" id="CHEBI:17499"/>
        <dbReference type="ChEBI" id="CHEBI:29950"/>
        <dbReference type="ChEBI" id="CHEBI:30616"/>
        <dbReference type="ChEBI" id="CHEBI:33019"/>
        <dbReference type="ChEBI" id="CHEBI:61963"/>
        <dbReference type="ChEBI" id="CHEBI:82748"/>
        <dbReference type="ChEBI" id="CHEBI:141453"/>
        <dbReference type="ChEBI" id="CHEBI:456215"/>
    </reaction>
    <physiologicalReaction direction="left-to-right" evidence="1">
        <dbReference type="Rhea" id="RHEA:57049"/>
    </physiologicalReaction>
</comment>
<comment type="cofactor">
    <cofactor evidence="1">
        <name>Mg(2+)</name>
        <dbReference type="ChEBI" id="CHEBI:18420"/>
    </cofactor>
</comment>
<comment type="cofactor">
    <cofactor evidence="1">
        <name>[4Fe-4S] cluster</name>
        <dbReference type="ChEBI" id="CHEBI:49883"/>
    </cofactor>
    <text evidence="1">Binds 1 [4Fe-4S] cluster per subunit. The cluster is chelated by three Cys residues, the fourth Fe has a free coordination site that may bind a sulfur atom transferred from the persulfide of IscS.</text>
</comment>
<comment type="pathway">
    <text evidence="1">tRNA modification.</text>
</comment>
<comment type="subunit">
    <text evidence="1">Homodimer.</text>
</comment>
<comment type="subcellular location">
    <subcellularLocation>
        <location evidence="1">Cytoplasm</location>
    </subcellularLocation>
</comment>
<comment type="miscellaneous">
    <text evidence="1">The thiolation reaction likely consists of two steps: a first activation step by ATP to form an adenylated intermediate of the target base of tRNA, and a second nucleophilic substitution step of the sulfur (S) atom supplied by the hydrosulfide attached to the Fe-S cluster.</text>
</comment>
<comment type="similarity">
    <text evidence="1">Belongs to the TtcA family.</text>
</comment>
<reference key="1">
    <citation type="journal article" date="2006" name="BMC Genomics">
        <title>Complete genome sequence of Shigella flexneri 5b and comparison with Shigella flexneri 2a.</title>
        <authorList>
            <person name="Nie H."/>
            <person name="Yang F."/>
            <person name="Zhang X."/>
            <person name="Yang J."/>
            <person name="Chen L."/>
            <person name="Wang J."/>
            <person name="Xiong Z."/>
            <person name="Peng J."/>
            <person name="Sun L."/>
            <person name="Dong J."/>
            <person name="Xue Y."/>
            <person name="Xu X."/>
            <person name="Chen S."/>
            <person name="Yao Z."/>
            <person name="Shen Y."/>
            <person name="Jin Q."/>
        </authorList>
    </citation>
    <scope>NUCLEOTIDE SEQUENCE [LARGE SCALE GENOMIC DNA]</scope>
    <source>
        <strain>8401</strain>
    </source>
</reference>